<comment type="function">
    <text evidence="4 6 7 8 9">Cell surface receptor for PLXNB1, PLXNB2, PLXNB3 and PLXND1 that plays an important role in cell-cell signaling (PubMed:17318185, PubMed:20043131). Regulates glutamatergic and GABAergic synapse development (PubMed:29981480). Promotes the development of inhibitory synapses in a PLXNB1-dependent manner and promotes the development of excitatory synapses in a PLXNB2-dependent manner (PubMed:29981480). Plays a role in priming antigen-specific T-cells, promotes differentiation of Th1 T-helper cells, and thereby contributes to adaptive immunity (PubMed:15780988). Promotes phosphorylation of TIMD2 (PubMed:12374982). Inhibits angiogenesis (PubMed:17318185). Promotes axon growth cone collapse (PubMed:20043131). Inhibits axonal extension by providing local signals to specify territories inaccessible for growing axons (PubMed:20043131).</text>
</comment>
<comment type="subunit">
    <text evidence="4 7 8">Interacts with PLXNB1, PLXNB2 and PLXNB3 (PubMed:20043131). Interacts with PLXND1 (PubMed:17318185). Interacts with TIMD2 (PubMed:12374982).</text>
</comment>
<comment type="subcellular location">
    <subcellularLocation>
        <location evidence="4 6 7 8">Cell membrane</location>
        <topology evidence="1">Single-pass type I membrane protein</topology>
    </subcellularLocation>
</comment>
<comment type="tissue specificity">
    <text evidence="9">Expressed in neurons and glia in the developing hippocampus.</text>
</comment>
<comment type="developmental stage">
    <text>Expressed from day 10 in the embryo. Low levels found between days 10-12. Expression peaks on day 13 with moderate levels from then until birth.</text>
</comment>
<comment type="disruption phenotype">
    <text evidence="5 6 7">Results are contradictory; one study (PubMed:15780988) finds no visible phenotype; mice are born at the expected Mendelian ratio and are fertile, but they present defects in T-cell differentiation and in T-cell responses to antigens. According to another publication (PubMed:15277503) gene disruption leads to degeneration of photoreceptor cells in the retina within the first month of life.</text>
</comment>
<comment type="similarity">
    <text evidence="10">Belongs to the semaphorin family.</text>
</comment>
<sequence>MALPSLGQDSWSLLRVFFFQLFLLPSLPPASGTGGQGPMPRVKYHAGDGHRALSFFQQKGLRDFDTLLLSDDGNTLYVGAREAVLALNIQNPGIPRLKNMIPWPASERKKTECAFKKKSNETQCFNFIRVLVSYNATHLYACGTFAFSPACTFIELQDSLLLPILIDKVMDGKGQSPFDPVHKHTAVLVDGMLYSGTMNNFLGSEPILMRTLGSQPVLKTDIFLRWLHADASFVAAIPSTQVVYFFFEETASEFDFFEELYISRVAQVCKNDVGGEKLLQKKWTTFLKAQLLCAQPGQLPFNIIRHAVLLPADSPSVSRIYAVFTSQWQVGGTRSSAVCAFSLTDIERVFKGKYKELNKETSRWTTYRGSEVSPRPGSCSMGPSSDKALTFMKDHFLMDEHVVGTPLLVKSGVEYTRLAVESARGLDGSSHVVMYLGTSTGSLHKAVVPQDSSAYLVEEIQLSPDSEPVRNLQLAPAQGAVFAGFSGGIWRVPRANCSVYESCVDCVLARDPHCAWDPESRLCSLLSGSTKPWKQDMERGNPEWVCTRGPMARSPRRQSPPQLIKEVLTVPNSILELPCPHLSALASYHWSHGRAKISEASATVYNGSLLLLPQDGVGGLYQCVATENGYSYPVVSYWVDSQDQPLALDPELAGVPRERVQVPLTRVGGGASMAAQRSYWPHFLIVTVLLAIVLLGVLTLLLASPLGALRARGKVQGCGMLPPREKAPLSRDQHLQPSKDHRTSASDVDADNNHLGAEVA</sequence>
<protein>
    <recommendedName>
        <fullName>Semaphorin-4A</fullName>
    </recommendedName>
    <alternativeName>
        <fullName>Semaphorin-B</fullName>
        <shortName>Sema B</shortName>
    </alternativeName>
</protein>
<proteinExistence type="evidence at protein level"/>
<feature type="signal peptide" evidence="1">
    <location>
        <begin position="1"/>
        <end position="32"/>
    </location>
</feature>
<feature type="chain" id="PRO_0000032323" description="Semaphorin-4A">
    <location>
        <begin position="33"/>
        <end position="760"/>
    </location>
</feature>
<feature type="topological domain" description="Extracellular" evidence="1">
    <location>
        <begin position="33"/>
        <end position="682"/>
    </location>
</feature>
<feature type="transmembrane region" description="Helical" evidence="1">
    <location>
        <begin position="683"/>
        <end position="703"/>
    </location>
</feature>
<feature type="topological domain" description="Cytoplasmic" evidence="1">
    <location>
        <begin position="704"/>
        <end position="760"/>
    </location>
</feature>
<feature type="domain" description="Sema" evidence="2">
    <location>
        <begin position="36"/>
        <end position="494"/>
    </location>
</feature>
<feature type="domain" description="PSI">
    <location>
        <begin position="496"/>
        <end position="547"/>
    </location>
</feature>
<feature type="domain" description="Ig-like C2-type">
    <location>
        <begin position="572"/>
        <end position="630"/>
    </location>
</feature>
<feature type="region of interest" description="Disordered" evidence="3">
    <location>
        <begin position="720"/>
        <end position="760"/>
    </location>
</feature>
<feature type="compositionally biased region" description="Basic and acidic residues" evidence="3">
    <location>
        <begin position="723"/>
        <end position="744"/>
    </location>
</feature>
<feature type="glycosylation site" description="N-linked (GlcNAc...) asparagine" evidence="1">
    <location>
        <position position="120"/>
    </location>
</feature>
<feature type="glycosylation site" description="N-linked (GlcNAc...) asparagine" evidence="1">
    <location>
        <position position="135"/>
    </location>
</feature>
<feature type="glycosylation site" description="N-linked (GlcNAc...) asparagine" evidence="1">
    <location>
        <position position="496"/>
    </location>
</feature>
<feature type="glycosylation site" description="N-linked (GlcNAc...) asparagine" evidence="1">
    <location>
        <position position="606"/>
    </location>
</feature>
<feature type="disulfide bond" evidence="2">
    <location>
        <begin position="113"/>
        <end position="124"/>
    </location>
</feature>
<feature type="disulfide bond" evidence="2">
    <location>
        <begin position="142"/>
        <end position="151"/>
    </location>
</feature>
<feature type="disulfide bond" evidence="2">
    <location>
        <begin position="269"/>
        <end position="379"/>
    </location>
</feature>
<feature type="disulfide bond" evidence="2">
    <location>
        <begin position="293"/>
        <end position="339"/>
    </location>
</feature>
<feature type="disulfide bond" evidence="2">
    <location>
        <begin position="497"/>
        <end position="514"/>
    </location>
</feature>
<feature type="disulfide bond" evidence="2">
    <location>
        <begin position="506"/>
        <end position="523"/>
    </location>
</feature>
<feature type="disulfide bond" evidence="2">
    <location>
        <begin position="579"/>
        <end position="623"/>
    </location>
</feature>
<feature type="sequence conflict" description="In Ref. 1; CAA59983." evidence="10" ref="1">
    <original>A</original>
    <variation>T</variation>
    <location>
        <position position="83"/>
    </location>
</feature>
<feature type="sequence conflict" description="In Ref. 1; CAA59983." evidence="10" ref="1">
    <original>FDPVHKHT</original>
    <variation>LTLFTSTQ</variation>
    <location>
        <begin position="178"/>
        <end position="185"/>
    </location>
</feature>
<feature type="sequence conflict" description="In Ref. 1; CAA59983." evidence="10" ref="1">
    <original>Q</original>
    <variation>H</variation>
    <location>
        <position position="215"/>
    </location>
</feature>
<feature type="sequence conflict" description="In Ref. 1; CAA59983." evidence="10" ref="1">
    <original>S</original>
    <variation>P</variation>
    <location>
        <position position="442"/>
    </location>
</feature>
<feature type="sequence conflict" description="In Ref. 1; CAA59983." evidence="10" ref="1">
    <original>P</original>
    <variation>R</variation>
    <location>
        <position position="578"/>
    </location>
</feature>
<gene>
    <name type="primary">Sema4a</name>
    <name type="synonym">Semab</name>
    <name type="synonym">SemB</name>
</gene>
<reference key="1">
    <citation type="journal article" date="1995" name="Neuron">
        <title>Murine semaphorin D/collapsin is a member of a diverse gene family and creates domains inhibitory for axonal extension.</title>
        <authorList>
            <person name="Pueschel A.W."/>
            <person name="Adams R.H."/>
            <person name="Betz H."/>
        </authorList>
    </citation>
    <scope>NUCLEOTIDE SEQUENCE [MRNA]</scope>
    <source>
        <strain>NMRI</strain>
        <tissue>Brain</tissue>
    </source>
</reference>
<reference key="2">
    <citation type="journal article" date="2009" name="PLoS Biol.">
        <title>Lineage-specific biology revealed by a finished genome assembly of the mouse.</title>
        <authorList>
            <person name="Church D.M."/>
            <person name="Goodstadt L."/>
            <person name="Hillier L.W."/>
            <person name="Zody M.C."/>
            <person name="Goldstein S."/>
            <person name="She X."/>
            <person name="Bult C.J."/>
            <person name="Agarwala R."/>
            <person name="Cherry J.L."/>
            <person name="DiCuccio M."/>
            <person name="Hlavina W."/>
            <person name="Kapustin Y."/>
            <person name="Meric P."/>
            <person name="Maglott D."/>
            <person name="Birtle Z."/>
            <person name="Marques A.C."/>
            <person name="Graves T."/>
            <person name="Zhou S."/>
            <person name="Teague B."/>
            <person name="Potamousis K."/>
            <person name="Churas C."/>
            <person name="Place M."/>
            <person name="Herschleb J."/>
            <person name="Runnheim R."/>
            <person name="Forrest D."/>
            <person name="Amos-Landgraf J."/>
            <person name="Schwartz D.C."/>
            <person name="Cheng Z."/>
            <person name="Lindblad-Toh K."/>
            <person name="Eichler E.E."/>
            <person name="Ponting C.P."/>
        </authorList>
    </citation>
    <scope>NUCLEOTIDE SEQUENCE [LARGE SCALE GENOMIC DNA]</scope>
    <source>
        <strain>C57BL/6J</strain>
    </source>
</reference>
<reference key="3">
    <citation type="submission" date="2005-09" db="EMBL/GenBank/DDBJ databases">
        <authorList>
            <person name="Mural R.J."/>
            <person name="Adams M.D."/>
            <person name="Myers E.W."/>
            <person name="Smith H.O."/>
            <person name="Venter J.C."/>
        </authorList>
    </citation>
    <scope>NUCLEOTIDE SEQUENCE [LARGE SCALE GENOMIC DNA]</scope>
</reference>
<reference key="4">
    <citation type="journal article" date="2002" name="Nature">
        <title>Class IV semaphorin Sema4A enhances T-cell activation and interacts with Tim-2.</title>
        <authorList>
            <person name="Kumanogoh A."/>
            <person name="Marukawa S."/>
            <person name="Suzuki K."/>
            <person name="Takegahara N."/>
            <person name="Watanabe C."/>
            <person name="Ch'ng E."/>
            <person name="Ishida I."/>
            <person name="Fujimura H."/>
            <person name="Sakoda S."/>
            <person name="Yoshida K."/>
            <person name="Kikutani H."/>
        </authorList>
    </citation>
    <scope>FUNCTION</scope>
    <scope>SUBCELLULAR LOCATION</scope>
    <scope>INTERACTION WITH TIMD2</scope>
</reference>
<reference key="5">
    <citation type="journal article" date="2004" name="Invest. Ophthalmol. Vis. Sci.">
        <title>Severe retinal degeneration associated with disruption of semaphorin 4A.</title>
        <authorList>
            <person name="Rice D.S."/>
            <person name="Huang W."/>
            <person name="Jones H.A."/>
            <person name="Hansen G."/>
            <person name="Ye G.L."/>
            <person name="Xu N."/>
            <person name="Wilson E.A."/>
            <person name="Troughton K."/>
            <person name="Vaddi K."/>
            <person name="Newton R.C."/>
            <person name="Zambrowicz B.P."/>
            <person name="Sands A.T."/>
        </authorList>
    </citation>
    <scope>DISRUPTION PHENOTYPE</scope>
</reference>
<reference key="6">
    <citation type="journal article" date="2005" name="Immunity">
        <title>Nonredundant roles of Sema4A in the immune system: defective T cell priming and Th1/Th2 regulation in Sema4A-deficient mice.</title>
        <authorList>
            <person name="Kumanogoh A."/>
            <person name="Shikina T."/>
            <person name="Suzuki K."/>
            <person name="Uematsu S."/>
            <person name="Yukawa K."/>
            <person name="Kashiwamura S."/>
            <person name="Tsutsui H."/>
            <person name="Yamamoto M."/>
            <person name="Takamatsu H."/>
            <person name="Ko-Mitamura E.P."/>
            <person name="Takegahara N."/>
            <person name="Marukawa S."/>
            <person name="Ishida I."/>
            <person name="Morishita H."/>
            <person name="Prasad D.V."/>
            <person name="Tamura M."/>
            <person name="Mizui M."/>
            <person name="Toyofuku T."/>
            <person name="Akira S."/>
            <person name="Takeda K."/>
            <person name="Okabe M."/>
            <person name="Kikutani H."/>
        </authorList>
    </citation>
    <scope>DISRUPTION PHENOTYPE</scope>
    <scope>SUBCELLULAR LOCATION</scope>
    <scope>FUNCTION</scope>
</reference>
<reference key="7">
    <citation type="journal article" date="2007" name="EMBO J.">
        <title>Semaphorin-4A, an activator for T-cell-mediated immunity, suppresses angiogenesis via plexin-D1.</title>
        <authorList>
            <person name="Toyofuku T."/>
            <person name="Yabuki M."/>
            <person name="Kamei J."/>
            <person name="Kamei M."/>
            <person name="Makino N."/>
            <person name="Kumanogoh A."/>
            <person name="Hori M."/>
        </authorList>
    </citation>
    <scope>DISRUPTION PHENOTYPE</scope>
    <scope>FUNCTION</scope>
    <scope>SUBCELLULAR LOCATION</scope>
    <scope>INTERACTION WITH PLXND1</scope>
</reference>
<reference key="8">
    <citation type="journal article" date="2007" name="Proc. Natl. Acad. Sci. U.S.A.">
        <title>Large-scale phosphorylation analysis of mouse liver.</title>
        <authorList>
            <person name="Villen J."/>
            <person name="Beausoleil S.A."/>
            <person name="Gerber S.A."/>
            <person name="Gygi S.P."/>
        </authorList>
    </citation>
    <scope>IDENTIFICATION BY MASS SPECTROMETRY [LARGE SCALE ANALYSIS]</scope>
    <source>
        <tissue>Liver</tissue>
    </source>
</reference>
<reference key="9">
    <citation type="journal article" date="2009" name="Immunity">
        <title>The phagosomal proteome in interferon-gamma-activated macrophages.</title>
        <authorList>
            <person name="Trost M."/>
            <person name="English L."/>
            <person name="Lemieux S."/>
            <person name="Courcelles M."/>
            <person name="Desjardins M."/>
            <person name="Thibault P."/>
        </authorList>
    </citation>
    <scope>IDENTIFICATION BY MASS SPECTROMETRY [LARGE SCALE ANALYSIS]</scope>
</reference>
<reference key="10">
    <citation type="journal article" date="2010" name="Cell">
        <title>A tissue-specific atlas of mouse protein phosphorylation and expression.</title>
        <authorList>
            <person name="Huttlin E.L."/>
            <person name="Jedrychowski M.P."/>
            <person name="Elias J.E."/>
            <person name="Goswami T."/>
            <person name="Rad R."/>
            <person name="Beausoleil S.A."/>
            <person name="Villen J."/>
            <person name="Haas W."/>
            <person name="Sowa M.E."/>
            <person name="Gygi S.P."/>
        </authorList>
    </citation>
    <scope>IDENTIFICATION BY MASS SPECTROMETRY [LARGE SCALE ANALYSIS]</scope>
    <source>
        <tissue>Brain</tissue>
        <tissue>Kidney</tissue>
        <tissue>Lung</tissue>
    </source>
</reference>
<reference key="11">
    <citation type="journal article" date="2010" name="Int. J. Mol. Med.">
        <title>Sema4A induces cell morphological changes through B-type plexin-mediated signaling.</title>
        <authorList>
            <person name="Yukawa K."/>
            <person name="Tanaka T."/>
            <person name="Yoshida K."/>
            <person name="Takeuchi N."/>
            <person name="Ito T."/>
            <person name="Takamatsu H."/>
            <person name="Kikutani H."/>
            <person name="Kumanogoh A."/>
        </authorList>
    </citation>
    <scope>FUNCTION</scope>
    <scope>SUBCELLULAR LOCATION</scope>
    <scope>INTERACTION WITH PLXNB1; PLXNB2 AND PLXNB3</scope>
</reference>
<reference key="12">
    <citation type="journal article" date="2018" name="Mol. Cell. Neurosci.">
        <title>Class 4 Semaphorins and Plexin-B receptors regulate GABAergic and glutamatergic synapse development in the mammalian hippocampus.</title>
        <authorList>
            <person name="McDermott J.E."/>
            <person name="Goldblatt D."/>
            <person name="Paradis S."/>
        </authorList>
    </citation>
    <scope>FUNCTION</scope>
    <scope>TISSUE SPECIFICITY</scope>
</reference>
<accession>Q62178</accession>
<accession>D3Z5L2</accession>
<name>SEM4A_MOUSE</name>
<dbReference type="EMBL" id="X85991">
    <property type="protein sequence ID" value="CAA59983.1"/>
    <property type="molecule type" value="mRNA"/>
</dbReference>
<dbReference type="EMBL" id="AC102388">
    <property type="status" value="NOT_ANNOTATED_CDS"/>
    <property type="molecule type" value="Genomic_DNA"/>
</dbReference>
<dbReference type="EMBL" id="CH466547">
    <property type="protein sequence ID" value="EDL15277.1"/>
    <property type="molecule type" value="Genomic_DNA"/>
</dbReference>
<dbReference type="EMBL" id="CH466547">
    <property type="protein sequence ID" value="EDL15278.1"/>
    <property type="molecule type" value="Genomic_DNA"/>
</dbReference>
<dbReference type="EMBL" id="CH466547">
    <property type="protein sequence ID" value="EDL15279.1"/>
    <property type="molecule type" value="Genomic_DNA"/>
</dbReference>
<dbReference type="CCDS" id="CCDS17475.1"/>
<dbReference type="PIR" id="I48745">
    <property type="entry name" value="I48745"/>
</dbReference>
<dbReference type="RefSeq" id="NP_001156961.1">
    <property type="nucleotide sequence ID" value="NM_001163489.2"/>
</dbReference>
<dbReference type="RefSeq" id="NP_001156962.1">
    <property type="nucleotide sequence ID" value="NM_001163490.2"/>
</dbReference>
<dbReference type="RefSeq" id="NP_001156963.1">
    <property type="nucleotide sequence ID" value="NM_001163491.2"/>
</dbReference>
<dbReference type="RefSeq" id="NP_001415586.1">
    <property type="nucleotide sequence ID" value="NM_001428657.1"/>
</dbReference>
<dbReference type="RefSeq" id="NP_001415587.1">
    <property type="nucleotide sequence ID" value="NM_001428658.1"/>
</dbReference>
<dbReference type="RefSeq" id="NP_038686.3">
    <property type="nucleotide sequence ID" value="NM_013658.3"/>
</dbReference>
<dbReference type="RefSeq" id="XP_006501252.1">
    <property type="nucleotide sequence ID" value="XM_006501189.3"/>
</dbReference>
<dbReference type="RefSeq" id="XP_011238353.1">
    <property type="nucleotide sequence ID" value="XM_011240051.1"/>
</dbReference>
<dbReference type="RefSeq" id="XP_036018865.1">
    <property type="nucleotide sequence ID" value="XM_036162972.1"/>
</dbReference>
<dbReference type="SMR" id="Q62178"/>
<dbReference type="BioGRID" id="203166">
    <property type="interactions" value="8"/>
</dbReference>
<dbReference type="FunCoup" id="Q62178">
    <property type="interactions" value="260"/>
</dbReference>
<dbReference type="STRING" id="10090.ENSMUSP00000029700"/>
<dbReference type="GlyConnect" id="2696">
    <property type="glycosylation" value="4 N-Linked glycans (1 site)"/>
</dbReference>
<dbReference type="GlyCosmos" id="Q62178">
    <property type="glycosylation" value="4 sites, 4 glycans"/>
</dbReference>
<dbReference type="GlyGen" id="Q62178">
    <property type="glycosylation" value="4 sites, 6 N-linked glycans (2 sites)"/>
</dbReference>
<dbReference type="iPTMnet" id="Q62178"/>
<dbReference type="PhosphoSitePlus" id="Q62178"/>
<dbReference type="SwissPalm" id="Q62178"/>
<dbReference type="PaxDb" id="10090-ENSMUSP00000029700"/>
<dbReference type="PeptideAtlas" id="Q62178"/>
<dbReference type="ProteomicsDB" id="256615"/>
<dbReference type="Antibodypedia" id="20428">
    <property type="antibodies" value="374 antibodies from 34 providers"/>
</dbReference>
<dbReference type="DNASU" id="20351"/>
<dbReference type="Ensembl" id="ENSMUST00000029700.12">
    <property type="protein sequence ID" value="ENSMUSP00000029700.6"/>
    <property type="gene ID" value="ENSMUSG00000028064.18"/>
</dbReference>
<dbReference type="Ensembl" id="ENSMUST00000165898.8">
    <property type="protein sequence ID" value="ENSMUSP00000128510.2"/>
    <property type="gene ID" value="ENSMUSG00000028064.18"/>
</dbReference>
<dbReference type="Ensembl" id="ENSMUST00000166237.8">
    <property type="protein sequence ID" value="ENSMUSP00000125909.2"/>
    <property type="gene ID" value="ENSMUSG00000028064.18"/>
</dbReference>
<dbReference type="Ensembl" id="ENSMUST00000169222.8">
    <property type="protein sequence ID" value="ENSMUSP00000128887.2"/>
    <property type="gene ID" value="ENSMUSG00000028064.18"/>
</dbReference>
<dbReference type="GeneID" id="20351"/>
<dbReference type="KEGG" id="mmu:20351"/>
<dbReference type="UCSC" id="uc008pvg.2">
    <property type="organism name" value="mouse"/>
</dbReference>
<dbReference type="AGR" id="MGI:107560"/>
<dbReference type="CTD" id="64218"/>
<dbReference type="MGI" id="MGI:107560">
    <property type="gene designation" value="Sema4a"/>
</dbReference>
<dbReference type="VEuPathDB" id="HostDB:ENSMUSG00000028064"/>
<dbReference type="eggNOG" id="KOG3611">
    <property type="taxonomic scope" value="Eukaryota"/>
</dbReference>
<dbReference type="GeneTree" id="ENSGT00940000161509"/>
<dbReference type="InParanoid" id="Q62178"/>
<dbReference type="OMA" id="KNNETQC"/>
<dbReference type="OrthoDB" id="9988752at2759"/>
<dbReference type="PhylomeDB" id="Q62178"/>
<dbReference type="TreeFam" id="TF316102"/>
<dbReference type="Reactome" id="R-MMU-416700">
    <property type="pathway name" value="Other semaphorin interactions"/>
</dbReference>
<dbReference type="BioGRID-ORCS" id="20351">
    <property type="hits" value="1 hit in 77 CRISPR screens"/>
</dbReference>
<dbReference type="ChiTaRS" id="Sema4a">
    <property type="organism name" value="mouse"/>
</dbReference>
<dbReference type="PRO" id="PR:Q62178"/>
<dbReference type="Proteomes" id="UP000000589">
    <property type="component" value="Chromosome 3"/>
</dbReference>
<dbReference type="RNAct" id="Q62178">
    <property type="molecule type" value="protein"/>
</dbReference>
<dbReference type="Bgee" id="ENSMUSG00000028064">
    <property type="expression patterns" value="Expressed in granulocyte and 257 other cell types or tissues"/>
</dbReference>
<dbReference type="ExpressionAtlas" id="Q62178">
    <property type="expression patterns" value="baseline and differential"/>
</dbReference>
<dbReference type="GO" id="GO:0005886">
    <property type="term" value="C:plasma membrane"/>
    <property type="evidence" value="ECO:0007669"/>
    <property type="project" value="UniProtKB-SubCell"/>
</dbReference>
<dbReference type="GO" id="GO:0030215">
    <property type="term" value="F:semaphorin receptor binding"/>
    <property type="evidence" value="ECO:0007669"/>
    <property type="project" value="InterPro"/>
</dbReference>
<dbReference type="GO" id="GO:0001525">
    <property type="term" value="P:angiogenesis"/>
    <property type="evidence" value="ECO:0007669"/>
    <property type="project" value="UniProtKB-KW"/>
</dbReference>
<dbReference type="GO" id="GO:0007409">
    <property type="term" value="P:axonogenesis"/>
    <property type="evidence" value="ECO:0000315"/>
    <property type="project" value="UniProtKB"/>
</dbReference>
<dbReference type="GO" id="GO:0016525">
    <property type="term" value="P:negative regulation of angiogenesis"/>
    <property type="evidence" value="ECO:0000315"/>
    <property type="project" value="UniProtKB"/>
</dbReference>
<dbReference type="GO" id="GO:1904891">
    <property type="term" value="P:positive regulation of excitatory synapse assembly"/>
    <property type="evidence" value="ECO:0000315"/>
    <property type="project" value="UniProtKB"/>
</dbReference>
<dbReference type="GO" id="GO:1905704">
    <property type="term" value="P:positive regulation of inhibitory synapse assembly"/>
    <property type="evidence" value="ECO:0000315"/>
    <property type="project" value="UniProtKB"/>
</dbReference>
<dbReference type="GO" id="GO:0008360">
    <property type="term" value="P:regulation of cell shape"/>
    <property type="evidence" value="ECO:0000314"/>
    <property type="project" value="UniProtKB"/>
</dbReference>
<dbReference type="GO" id="GO:0010594">
    <property type="term" value="P:regulation of endothelial cell migration"/>
    <property type="evidence" value="ECO:0000315"/>
    <property type="project" value="UniProtKB"/>
</dbReference>
<dbReference type="GO" id="GO:0071526">
    <property type="term" value="P:semaphorin-plexin signaling pathway"/>
    <property type="evidence" value="ECO:0000314"/>
    <property type="project" value="UniProtKB"/>
</dbReference>
<dbReference type="GO" id="GO:0002292">
    <property type="term" value="P:T cell differentiation involved in immune response"/>
    <property type="evidence" value="ECO:0000315"/>
    <property type="project" value="UniProtKB"/>
</dbReference>
<dbReference type="GO" id="GO:0045063">
    <property type="term" value="P:T-helper 1 cell differentiation"/>
    <property type="evidence" value="ECO:0000315"/>
    <property type="project" value="UniProtKB"/>
</dbReference>
<dbReference type="FunFam" id="3.30.1680.10:FF:000019">
    <property type="entry name" value="Semaphorin 4A"/>
    <property type="match status" value="1"/>
</dbReference>
<dbReference type="FunFam" id="2.130.10.10:FF:000257">
    <property type="entry name" value="semaphorin-4A isoform X2"/>
    <property type="match status" value="1"/>
</dbReference>
<dbReference type="Gene3D" id="2.60.40.10">
    <property type="entry name" value="Immunoglobulins"/>
    <property type="match status" value="1"/>
</dbReference>
<dbReference type="Gene3D" id="3.30.1680.10">
    <property type="entry name" value="ligand-binding face of the semaphorins, domain 2"/>
    <property type="match status" value="1"/>
</dbReference>
<dbReference type="Gene3D" id="2.130.10.10">
    <property type="entry name" value="YVTN repeat-like/Quinoprotein amine dehydrogenase"/>
    <property type="match status" value="1"/>
</dbReference>
<dbReference type="InterPro" id="IPR013783">
    <property type="entry name" value="Ig-like_fold"/>
</dbReference>
<dbReference type="InterPro" id="IPR002165">
    <property type="entry name" value="Plexin_repeat"/>
</dbReference>
<dbReference type="InterPro" id="IPR016201">
    <property type="entry name" value="PSI"/>
</dbReference>
<dbReference type="InterPro" id="IPR001627">
    <property type="entry name" value="Semap_dom"/>
</dbReference>
<dbReference type="InterPro" id="IPR036352">
    <property type="entry name" value="Semap_dom_sf"/>
</dbReference>
<dbReference type="InterPro" id="IPR027231">
    <property type="entry name" value="Semaphorin"/>
</dbReference>
<dbReference type="InterPro" id="IPR015943">
    <property type="entry name" value="WD40/YVTN_repeat-like_dom_sf"/>
</dbReference>
<dbReference type="PANTHER" id="PTHR11036">
    <property type="entry name" value="SEMAPHORIN"/>
    <property type="match status" value="1"/>
</dbReference>
<dbReference type="PANTHER" id="PTHR11036:SF15">
    <property type="entry name" value="SEMAPHORIN-4A"/>
    <property type="match status" value="1"/>
</dbReference>
<dbReference type="Pfam" id="PF01437">
    <property type="entry name" value="PSI"/>
    <property type="match status" value="1"/>
</dbReference>
<dbReference type="Pfam" id="PF01403">
    <property type="entry name" value="Sema"/>
    <property type="match status" value="1"/>
</dbReference>
<dbReference type="SMART" id="SM00423">
    <property type="entry name" value="PSI"/>
    <property type="match status" value="1"/>
</dbReference>
<dbReference type="SMART" id="SM00630">
    <property type="entry name" value="Sema"/>
    <property type="match status" value="1"/>
</dbReference>
<dbReference type="SUPFAM" id="SSF103575">
    <property type="entry name" value="Plexin repeat"/>
    <property type="match status" value="1"/>
</dbReference>
<dbReference type="SUPFAM" id="SSF101912">
    <property type="entry name" value="Sema domain"/>
    <property type="match status" value="1"/>
</dbReference>
<dbReference type="PROSITE" id="PS51004">
    <property type="entry name" value="SEMA"/>
    <property type="match status" value="1"/>
</dbReference>
<evidence type="ECO:0000255" key="1"/>
<evidence type="ECO:0000255" key="2">
    <source>
        <dbReference type="PROSITE-ProRule" id="PRU00352"/>
    </source>
</evidence>
<evidence type="ECO:0000256" key="3">
    <source>
        <dbReference type="SAM" id="MobiDB-lite"/>
    </source>
</evidence>
<evidence type="ECO:0000269" key="4">
    <source>
    </source>
</evidence>
<evidence type="ECO:0000269" key="5">
    <source>
    </source>
</evidence>
<evidence type="ECO:0000269" key="6">
    <source>
    </source>
</evidence>
<evidence type="ECO:0000269" key="7">
    <source>
    </source>
</evidence>
<evidence type="ECO:0000269" key="8">
    <source>
    </source>
</evidence>
<evidence type="ECO:0000269" key="9">
    <source>
    </source>
</evidence>
<evidence type="ECO:0000305" key="10"/>
<organism>
    <name type="scientific">Mus musculus</name>
    <name type="common">Mouse</name>
    <dbReference type="NCBI Taxonomy" id="10090"/>
    <lineage>
        <taxon>Eukaryota</taxon>
        <taxon>Metazoa</taxon>
        <taxon>Chordata</taxon>
        <taxon>Craniata</taxon>
        <taxon>Vertebrata</taxon>
        <taxon>Euteleostomi</taxon>
        <taxon>Mammalia</taxon>
        <taxon>Eutheria</taxon>
        <taxon>Euarchontoglires</taxon>
        <taxon>Glires</taxon>
        <taxon>Rodentia</taxon>
        <taxon>Myomorpha</taxon>
        <taxon>Muroidea</taxon>
        <taxon>Muridae</taxon>
        <taxon>Murinae</taxon>
        <taxon>Mus</taxon>
        <taxon>Mus</taxon>
    </lineage>
</organism>
<keyword id="KW-1064">Adaptive immunity</keyword>
<keyword id="KW-0037">Angiogenesis</keyword>
<keyword id="KW-1003">Cell membrane</keyword>
<keyword id="KW-0217">Developmental protein</keyword>
<keyword id="KW-0221">Differentiation</keyword>
<keyword id="KW-1015">Disulfide bond</keyword>
<keyword id="KW-0325">Glycoprotein</keyword>
<keyword id="KW-0391">Immunity</keyword>
<keyword id="KW-0393">Immunoglobulin domain</keyword>
<keyword id="KW-0472">Membrane</keyword>
<keyword id="KW-0524">Neurogenesis</keyword>
<keyword id="KW-1185">Reference proteome</keyword>
<keyword id="KW-0732">Signal</keyword>
<keyword id="KW-0812">Transmembrane</keyword>
<keyword id="KW-1133">Transmembrane helix</keyword>